<protein>
    <recommendedName>
        <fullName evidence="1">Pyridoxine 5'-phosphate synthase</fullName>
        <shortName evidence="1">PNP synthase</shortName>
        <ecNumber evidence="1">2.6.99.2</ecNumber>
    </recommendedName>
</protein>
<comment type="function">
    <text evidence="1">Catalyzes the complicated ring closure reaction between the two acyclic compounds 1-deoxy-D-xylulose-5-phosphate (DXP) and 3-amino-2-oxopropyl phosphate (1-amino-acetone-3-phosphate or AAP) to form pyridoxine 5'-phosphate (PNP) and inorganic phosphate.</text>
</comment>
<comment type="catalytic activity">
    <reaction evidence="1">
        <text>3-amino-2-oxopropyl phosphate + 1-deoxy-D-xylulose 5-phosphate = pyridoxine 5'-phosphate + phosphate + 2 H2O + H(+)</text>
        <dbReference type="Rhea" id="RHEA:15265"/>
        <dbReference type="ChEBI" id="CHEBI:15377"/>
        <dbReference type="ChEBI" id="CHEBI:15378"/>
        <dbReference type="ChEBI" id="CHEBI:43474"/>
        <dbReference type="ChEBI" id="CHEBI:57279"/>
        <dbReference type="ChEBI" id="CHEBI:57792"/>
        <dbReference type="ChEBI" id="CHEBI:58589"/>
        <dbReference type="EC" id="2.6.99.2"/>
    </reaction>
</comment>
<comment type="pathway">
    <text evidence="1">Cofactor biosynthesis; pyridoxine 5'-phosphate biosynthesis; pyridoxine 5'-phosphate from D-erythrose 4-phosphate: step 5/5.</text>
</comment>
<comment type="subunit">
    <text evidence="1">Homooctamer; tetramer of dimers.</text>
</comment>
<comment type="subcellular location">
    <subcellularLocation>
        <location evidence="1">Cytoplasm</location>
    </subcellularLocation>
</comment>
<comment type="similarity">
    <text evidence="1">Belongs to the PNP synthase family.</text>
</comment>
<name>PDXJ_BRUSU</name>
<gene>
    <name evidence="1" type="primary">pdxJ</name>
    <name type="ordered locus">BR1385</name>
    <name type="ordered locus">BS1330_I1379</name>
</gene>
<proteinExistence type="inferred from homology"/>
<evidence type="ECO:0000255" key="1">
    <source>
        <dbReference type="HAMAP-Rule" id="MF_00279"/>
    </source>
</evidence>
<accession>Q8FZT6</accession>
<accession>G0KB68</accession>
<reference key="1">
    <citation type="journal article" date="2002" name="Proc. Natl. Acad. Sci. U.S.A.">
        <title>The Brucella suis genome reveals fundamental similarities between animal and plant pathogens and symbionts.</title>
        <authorList>
            <person name="Paulsen I.T."/>
            <person name="Seshadri R."/>
            <person name="Nelson K.E."/>
            <person name="Eisen J.A."/>
            <person name="Heidelberg J.F."/>
            <person name="Read T.D."/>
            <person name="Dodson R.J."/>
            <person name="Umayam L.A."/>
            <person name="Brinkac L.M."/>
            <person name="Beanan M.J."/>
            <person name="Daugherty S.C."/>
            <person name="DeBoy R.T."/>
            <person name="Durkin A.S."/>
            <person name="Kolonay J.F."/>
            <person name="Madupu R."/>
            <person name="Nelson W.C."/>
            <person name="Ayodeji B."/>
            <person name="Kraul M."/>
            <person name="Shetty J."/>
            <person name="Malek J.A."/>
            <person name="Van Aken S.E."/>
            <person name="Riedmuller S."/>
            <person name="Tettelin H."/>
            <person name="Gill S.R."/>
            <person name="White O."/>
            <person name="Salzberg S.L."/>
            <person name="Hoover D.L."/>
            <person name="Lindler L.E."/>
            <person name="Halling S.M."/>
            <person name="Boyle S.M."/>
            <person name="Fraser C.M."/>
        </authorList>
    </citation>
    <scope>NUCLEOTIDE SEQUENCE [LARGE SCALE GENOMIC DNA]</scope>
    <source>
        <strain>1330</strain>
    </source>
</reference>
<reference key="2">
    <citation type="journal article" date="2011" name="J. Bacteriol.">
        <title>Revised genome sequence of Brucella suis 1330.</title>
        <authorList>
            <person name="Tae H."/>
            <person name="Shallom S."/>
            <person name="Settlage R."/>
            <person name="Preston D."/>
            <person name="Adams L.G."/>
            <person name="Garner H.R."/>
        </authorList>
    </citation>
    <scope>NUCLEOTIDE SEQUENCE [LARGE SCALE GENOMIC DNA]</scope>
    <source>
        <strain>1330</strain>
    </source>
</reference>
<organism>
    <name type="scientific">Brucella suis biovar 1 (strain 1330)</name>
    <dbReference type="NCBI Taxonomy" id="204722"/>
    <lineage>
        <taxon>Bacteria</taxon>
        <taxon>Pseudomonadati</taxon>
        <taxon>Pseudomonadota</taxon>
        <taxon>Alphaproteobacteria</taxon>
        <taxon>Hyphomicrobiales</taxon>
        <taxon>Brucellaceae</taxon>
        <taxon>Brucella/Ochrobactrum group</taxon>
        <taxon>Brucella</taxon>
    </lineage>
</organism>
<feature type="chain" id="PRO_0000190110" description="Pyridoxine 5'-phosphate synthase">
    <location>
        <begin position="1"/>
        <end position="246"/>
    </location>
</feature>
<feature type="active site" description="Proton acceptor" evidence="1">
    <location>
        <position position="44"/>
    </location>
</feature>
<feature type="active site" description="Proton acceptor" evidence="1">
    <location>
        <position position="76"/>
    </location>
</feature>
<feature type="active site" description="Proton donor" evidence="1">
    <location>
        <position position="198"/>
    </location>
</feature>
<feature type="binding site" evidence="1">
    <location>
        <position position="8"/>
    </location>
    <ligand>
        <name>3-amino-2-oxopropyl phosphate</name>
        <dbReference type="ChEBI" id="CHEBI:57279"/>
    </ligand>
</feature>
<feature type="binding site" evidence="1">
    <location>
        <position position="19"/>
    </location>
    <ligand>
        <name>3-amino-2-oxopropyl phosphate</name>
        <dbReference type="ChEBI" id="CHEBI:57279"/>
    </ligand>
</feature>
<feature type="binding site" evidence="1">
    <location>
        <position position="46"/>
    </location>
    <ligand>
        <name>1-deoxy-D-xylulose 5-phosphate</name>
        <dbReference type="ChEBI" id="CHEBI:57792"/>
    </ligand>
</feature>
<feature type="binding site" evidence="1">
    <location>
        <position position="51"/>
    </location>
    <ligand>
        <name>1-deoxy-D-xylulose 5-phosphate</name>
        <dbReference type="ChEBI" id="CHEBI:57792"/>
    </ligand>
</feature>
<feature type="binding site" evidence="1">
    <location>
        <position position="106"/>
    </location>
    <ligand>
        <name>1-deoxy-D-xylulose 5-phosphate</name>
        <dbReference type="ChEBI" id="CHEBI:57792"/>
    </ligand>
</feature>
<feature type="binding site" evidence="1">
    <location>
        <position position="199"/>
    </location>
    <ligand>
        <name>3-amino-2-oxopropyl phosphate</name>
        <dbReference type="ChEBI" id="CHEBI:57279"/>
    </ligand>
</feature>
<feature type="binding site" evidence="1">
    <location>
        <begin position="221"/>
        <end position="222"/>
    </location>
    <ligand>
        <name>3-amino-2-oxopropyl phosphate</name>
        <dbReference type="ChEBI" id="CHEBI:57279"/>
    </ligand>
</feature>
<feature type="site" description="Transition state stabilizer" evidence="1">
    <location>
        <position position="157"/>
    </location>
</feature>
<dbReference type="EC" id="2.6.99.2" evidence="1"/>
<dbReference type="EMBL" id="AE014291">
    <property type="protein sequence ID" value="AAN30298.1"/>
    <property type="molecule type" value="Genomic_DNA"/>
</dbReference>
<dbReference type="EMBL" id="CP002997">
    <property type="protein sequence ID" value="AEM18714.1"/>
    <property type="molecule type" value="Genomic_DNA"/>
</dbReference>
<dbReference type="RefSeq" id="WP_004690972.1">
    <property type="nucleotide sequence ID" value="NZ_KN046804.1"/>
</dbReference>
<dbReference type="SMR" id="Q8FZT6"/>
<dbReference type="KEGG" id="bms:BR1385"/>
<dbReference type="KEGG" id="bsi:BS1330_I1379"/>
<dbReference type="PATRIC" id="fig|204722.21.peg.861"/>
<dbReference type="HOGENOM" id="CLU_074563_1_0_5"/>
<dbReference type="PhylomeDB" id="Q8FZT6"/>
<dbReference type="UniPathway" id="UPA00244">
    <property type="reaction ID" value="UER00313"/>
</dbReference>
<dbReference type="Proteomes" id="UP000007104">
    <property type="component" value="Chromosome I"/>
</dbReference>
<dbReference type="GO" id="GO:0005829">
    <property type="term" value="C:cytosol"/>
    <property type="evidence" value="ECO:0007669"/>
    <property type="project" value="TreeGrafter"/>
</dbReference>
<dbReference type="GO" id="GO:0033856">
    <property type="term" value="F:pyridoxine 5'-phosphate synthase activity"/>
    <property type="evidence" value="ECO:0007669"/>
    <property type="project" value="UniProtKB-EC"/>
</dbReference>
<dbReference type="GO" id="GO:0008615">
    <property type="term" value="P:pyridoxine biosynthetic process"/>
    <property type="evidence" value="ECO:0007669"/>
    <property type="project" value="UniProtKB-UniRule"/>
</dbReference>
<dbReference type="CDD" id="cd00003">
    <property type="entry name" value="PNPsynthase"/>
    <property type="match status" value="1"/>
</dbReference>
<dbReference type="Gene3D" id="3.20.20.70">
    <property type="entry name" value="Aldolase class I"/>
    <property type="match status" value="1"/>
</dbReference>
<dbReference type="HAMAP" id="MF_00279">
    <property type="entry name" value="PdxJ"/>
    <property type="match status" value="1"/>
</dbReference>
<dbReference type="InterPro" id="IPR013785">
    <property type="entry name" value="Aldolase_TIM"/>
</dbReference>
<dbReference type="InterPro" id="IPR004569">
    <property type="entry name" value="PyrdxlP_synth_PdxJ"/>
</dbReference>
<dbReference type="InterPro" id="IPR036130">
    <property type="entry name" value="Pyridoxine-5'_phos_synth"/>
</dbReference>
<dbReference type="NCBIfam" id="TIGR00559">
    <property type="entry name" value="pdxJ"/>
    <property type="match status" value="1"/>
</dbReference>
<dbReference type="NCBIfam" id="NF003626">
    <property type="entry name" value="PRK05265.1-4"/>
    <property type="match status" value="1"/>
</dbReference>
<dbReference type="PANTHER" id="PTHR30456">
    <property type="entry name" value="PYRIDOXINE 5'-PHOSPHATE SYNTHASE"/>
    <property type="match status" value="1"/>
</dbReference>
<dbReference type="PANTHER" id="PTHR30456:SF0">
    <property type="entry name" value="PYRIDOXINE 5'-PHOSPHATE SYNTHASE"/>
    <property type="match status" value="1"/>
</dbReference>
<dbReference type="Pfam" id="PF03740">
    <property type="entry name" value="PdxJ"/>
    <property type="match status" value="1"/>
</dbReference>
<dbReference type="SUPFAM" id="SSF63892">
    <property type="entry name" value="Pyridoxine 5'-phosphate synthase"/>
    <property type="match status" value="1"/>
</dbReference>
<sequence>MPAKLSVNLNAIAMLRNRRDLPWPSVTGLGRAALAAGAAGLTVHPRPDQRHIRFSDLGDIRALIDDEYPQAEFNIEGFPSEAFLDLVEKHEPEQVTLVPDDPMQATSDHGWDFMSKADFLAPIVARLKGRGMRVSLFADPDSLGYERAKAIGADHVELYTGPYGATHDDPAAAARELDRLEKAARAATALGLAVNAGHDLTVDNLPALVKRIPQLAEVSIGHGLTADALMYGIPVTVSRYITALAG</sequence>
<keyword id="KW-0963">Cytoplasm</keyword>
<keyword id="KW-0664">Pyridoxine biosynthesis</keyword>
<keyword id="KW-0808">Transferase</keyword>